<accession>Q8NSZ4</accession>
<accession>Q6M7M6</accession>
<sequence length="122" mass="13338">MIQQESRLKVADNTGAREILCIRVLGGSTRRFAGIGDVIVATVKEATPGGNVKSGEIVKAVIVRTKKETRRADGSYISFDENAAVIIKNDNEPRGTRIFGPVARELREKKFMKIVSLAPEVI</sequence>
<feature type="chain" id="PRO_0000266473" description="Large ribosomal subunit protein uL14">
    <location>
        <begin position="1"/>
        <end position="122"/>
    </location>
</feature>
<gene>
    <name evidence="1" type="primary">rplN</name>
    <name type="ordered locus">Cgl0521</name>
    <name type="ordered locus">cg0608</name>
</gene>
<reference key="1">
    <citation type="journal article" date="2003" name="Appl. Microbiol. Biotechnol.">
        <title>The Corynebacterium glutamicum genome: features and impacts on biotechnological processes.</title>
        <authorList>
            <person name="Ikeda M."/>
            <person name="Nakagawa S."/>
        </authorList>
    </citation>
    <scope>NUCLEOTIDE SEQUENCE [LARGE SCALE GENOMIC DNA]</scope>
    <source>
        <strain>ATCC 13032 / DSM 20300 / JCM 1318 / BCRC 11384 / CCUG 27702 / LMG 3730 / NBRC 12168 / NCIMB 10025 / NRRL B-2784 / 534</strain>
    </source>
</reference>
<reference key="2">
    <citation type="journal article" date="2003" name="J. Biotechnol.">
        <title>The complete Corynebacterium glutamicum ATCC 13032 genome sequence and its impact on the production of L-aspartate-derived amino acids and vitamins.</title>
        <authorList>
            <person name="Kalinowski J."/>
            <person name="Bathe B."/>
            <person name="Bartels D."/>
            <person name="Bischoff N."/>
            <person name="Bott M."/>
            <person name="Burkovski A."/>
            <person name="Dusch N."/>
            <person name="Eggeling L."/>
            <person name="Eikmanns B.J."/>
            <person name="Gaigalat L."/>
            <person name="Goesmann A."/>
            <person name="Hartmann M."/>
            <person name="Huthmacher K."/>
            <person name="Kraemer R."/>
            <person name="Linke B."/>
            <person name="McHardy A.C."/>
            <person name="Meyer F."/>
            <person name="Moeckel B."/>
            <person name="Pfefferle W."/>
            <person name="Puehler A."/>
            <person name="Rey D.A."/>
            <person name="Rueckert C."/>
            <person name="Rupp O."/>
            <person name="Sahm H."/>
            <person name="Wendisch V.F."/>
            <person name="Wiegraebe I."/>
            <person name="Tauch A."/>
        </authorList>
    </citation>
    <scope>NUCLEOTIDE SEQUENCE [LARGE SCALE GENOMIC DNA]</scope>
    <source>
        <strain>ATCC 13032 / DSM 20300 / JCM 1318 / BCRC 11384 / CCUG 27702 / LMG 3730 / NBRC 12168 / NCIMB 10025 / NRRL B-2784 / 534</strain>
    </source>
</reference>
<keyword id="KW-1185">Reference proteome</keyword>
<keyword id="KW-0687">Ribonucleoprotein</keyword>
<keyword id="KW-0689">Ribosomal protein</keyword>
<keyword id="KW-0694">RNA-binding</keyword>
<keyword id="KW-0699">rRNA-binding</keyword>
<protein>
    <recommendedName>
        <fullName evidence="1">Large ribosomal subunit protein uL14</fullName>
    </recommendedName>
    <alternativeName>
        <fullName evidence="2">50S ribosomal protein L14</fullName>
    </alternativeName>
</protein>
<name>RL14_CORGL</name>
<dbReference type="EMBL" id="BA000036">
    <property type="protein sequence ID" value="BAB97914.1"/>
    <property type="molecule type" value="Genomic_DNA"/>
</dbReference>
<dbReference type="EMBL" id="BX927149">
    <property type="protein sequence ID" value="CAF19229.1"/>
    <property type="molecule type" value="Genomic_DNA"/>
</dbReference>
<dbReference type="RefSeq" id="NP_599760.1">
    <property type="nucleotide sequence ID" value="NC_003450.3"/>
</dbReference>
<dbReference type="RefSeq" id="WP_003854312.1">
    <property type="nucleotide sequence ID" value="NC_006958.1"/>
</dbReference>
<dbReference type="SMR" id="Q8NSZ4"/>
<dbReference type="STRING" id="196627.cg0608"/>
<dbReference type="GeneID" id="1021522"/>
<dbReference type="KEGG" id="cgb:cg0608"/>
<dbReference type="KEGG" id="cgl:Cgl0521"/>
<dbReference type="PATRIC" id="fig|196627.13.peg.515"/>
<dbReference type="eggNOG" id="COG0093">
    <property type="taxonomic scope" value="Bacteria"/>
</dbReference>
<dbReference type="HOGENOM" id="CLU_095071_2_1_11"/>
<dbReference type="OrthoDB" id="9806379at2"/>
<dbReference type="BioCyc" id="CORYNE:G18NG-10083-MONOMER"/>
<dbReference type="Proteomes" id="UP000000582">
    <property type="component" value="Chromosome"/>
</dbReference>
<dbReference type="Proteomes" id="UP000001009">
    <property type="component" value="Chromosome"/>
</dbReference>
<dbReference type="GO" id="GO:0022625">
    <property type="term" value="C:cytosolic large ribosomal subunit"/>
    <property type="evidence" value="ECO:0007669"/>
    <property type="project" value="TreeGrafter"/>
</dbReference>
<dbReference type="GO" id="GO:0070180">
    <property type="term" value="F:large ribosomal subunit rRNA binding"/>
    <property type="evidence" value="ECO:0007669"/>
    <property type="project" value="TreeGrafter"/>
</dbReference>
<dbReference type="GO" id="GO:0003735">
    <property type="term" value="F:structural constituent of ribosome"/>
    <property type="evidence" value="ECO:0007669"/>
    <property type="project" value="InterPro"/>
</dbReference>
<dbReference type="GO" id="GO:0006412">
    <property type="term" value="P:translation"/>
    <property type="evidence" value="ECO:0007669"/>
    <property type="project" value="UniProtKB-UniRule"/>
</dbReference>
<dbReference type="CDD" id="cd00337">
    <property type="entry name" value="Ribosomal_uL14"/>
    <property type="match status" value="1"/>
</dbReference>
<dbReference type="FunFam" id="2.40.150.20:FF:000001">
    <property type="entry name" value="50S ribosomal protein L14"/>
    <property type="match status" value="1"/>
</dbReference>
<dbReference type="Gene3D" id="2.40.150.20">
    <property type="entry name" value="Ribosomal protein L14"/>
    <property type="match status" value="1"/>
</dbReference>
<dbReference type="HAMAP" id="MF_01367">
    <property type="entry name" value="Ribosomal_uL14"/>
    <property type="match status" value="1"/>
</dbReference>
<dbReference type="InterPro" id="IPR000218">
    <property type="entry name" value="Ribosomal_uL14"/>
</dbReference>
<dbReference type="InterPro" id="IPR005745">
    <property type="entry name" value="Ribosomal_uL14_bac-type"/>
</dbReference>
<dbReference type="InterPro" id="IPR019972">
    <property type="entry name" value="Ribosomal_uL14_CS"/>
</dbReference>
<dbReference type="InterPro" id="IPR036853">
    <property type="entry name" value="Ribosomal_uL14_sf"/>
</dbReference>
<dbReference type="NCBIfam" id="TIGR01067">
    <property type="entry name" value="rplN_bact"/>
    <property type="match status" value="1"/>
</dbReference>
<dbReference type="PANTHER" id="PTHR11761">
    <property type="entry name" value="50S/60S RIBOSOMAL PROTEIN L14/L23"/>
    <property type="match status" value="1"/>
</dbReference>
<dbReference type="PANTHER" id="PTHR11761:SF3">
    <property type="entry name" value="LARGE RIBOSOMAL SUBUNIT PROTEIN UL14M"/>
    <property type="match status" value="1"/>
</dbReference>
<dbReference type="Pfam" id="PF00238">
    <property type="entry name" value="Ribosomal_L14"/>
    <property type="match status" value="1"/>
</dbReference>
<dbReference type="SMART" id="SM01374">
    <property type="entry name" value="Ribosomal_L14"/>
    <property type="match status" value="1"/>
</dbReference>
<dbReference type="SUPFAM" id="SSF50193">
    <property type="entry name" value="Ribosomal protein L14"/>
    <property type="match status" value="1"/>
</dbReference>
<dbReference type="PROSITE" id="PS00049">
    <property type="entry name" value="RIBOSOMAL_L14"/>
    <property type="match status" value="1"/>
</dbReference>
<organism>
    <name type="scientific">Corynebacterium glutamicum (strain ATCC 13032 / DSM 20300 / JCM 1318 / BCRC 11384 / CCUG 27702 / LMG 3730 / NBRC 12168 / NCIMB 10025 / NRRL B-2784 / 534)</name>
    <dbReference type="NCBI Taxonomy" id="196627"/>
    <lineage>
        <taxon>Bacteria</taxon>
        <taxon>Bacillati</taxon>
        <taxon>Actinomycetota</taxon>
        <taxon>Actinomycetes</taxon>
        <taxon>Mycobacteriales</taxon>
        <taxon>Corynebacteriaceae</taxon>
        <taxon>Corynebacterium</taxon>
    </lineage>
</organism>
<evidence type="ECO:0000255" key="1">
    <source>
        <dbReference type="HAMAP-Rule" id="MF_01367"/>
    </source>
</evidence>
<evidence type="ECO:0000305" key="2"/>
<comment type="function">
    <text evidence="1">Binds to 23S rRNA. Forms part of two intersubunit bridges in the 70S ribosome.</text>
</comment>
<comment type="subunit">
    <text evidence="1">Part of the 50S ribosomal subunit. Forms a cluster with proteins L3 and L19. In the 70S ribosome, L14 and L19 interact and together make contacts with the 16S rRNA in bridges B5 and B8.</text>
</comment>
<comment type="similarity">
    <text evidence="1">Belongs to the universal ribosomal protein uL14 family.</text>
</comment>
<proteinExistence type="inferred from homology"/>